<accession>Q8YZG8</accession>
<organism>
    <name type="scientific">Nostoc sp. (strain PCC 7120 / SAG 25.82 / UTEX 2576)</name>
    <dbReference type="NCBI Taxonomy" id="103690"/>
    <lineage>
        <taxon>Bacteria</taxon>
        <taxon>Bacillati</taxon>
        <taxon>Cyanobacteriota</taxon>
        <taxon>Cyanophyceae</taxon>
        <taxon>Nostocales</taxon>
        <taxon>Nostocaceae</taxon>
        <taxon>Nostoc</taxon>
    </lineage>
</organism>
<proteinExistence type="inferred from homology"/>
<feature type="chain" id="PRO_0000188310" description="Glycerol-3-phosphate acyltransferase">
    <location>
        <begin position="1"/>
        <end position="226"/>
    </location>
</feature>
<feature type="transmembrane region" description="Helical" evidence="1">
    <location>
        <begin position="1"/>
        <end position="21"/>
    </location>
</feature>
<feature type="transmembrane region" description="Helical" evidence="1">
    <location>
        <begin position="60"/>
        <end position="80"/>
    </location>
</feature>
<feature type="transmembrane region" description="Helical" evidence="1">
    <location>
        <begin position="102"/>
        <end position="122"/>
    </location>
</feature>
<feature type="transmembrane region" description="Helical" evidence="1">
    <location>
        <begin position="134"/>
        <end position="154"/>
    </location>
</feature>
<feature type="transmembrane region" description="Helical" evidence="1">
    <location>
        <begin position="159"/>
        <end position="178"/>
    </location>
</feature>
<feature type="transmembrane region" description="Helical" evidence="1">
    <location>
        <begin position="182"/>
        <end position="197"/>
    </location>
</feature>
<comment type="function">
    <text evidence="1">Catalyzes the transfer of an acyl group from acyl-phosphate (acyl-PO(4)) to glycerol-3-phosphate (G3P) to form lysophosphatidic acid (LPA). This enzyme utilizes acyl-phosphate as fatty acyl donor, but not acyl-CoA or acyl-ACP.</text>
</comment>
<comment type="catalytic activity">
    <reaction evidence="1">
        <text>an acyl phosphate + sn-glycerol 3-phosphate = a 1-acyl-sn-glycero-3-phosphate + phosphate</text>
        <dbReference type="Rhea" id="RHEA:34075"/>
        <dbReference type="ChEBI" id="CHEBI:43474"/>
        <dbReference type="ChEBI" id="CHEBI:57597"/>
        <dbReference type="ChEBI" id="CHEBI:57970"/>
        <dbReference type="ChEBI" id="CHEBI:59918"/>
        <dbReference type="EC" id="2.3.1.275"/>
    </reaction>
</comment>
<comment type="pathway">
    <text evidence="1">Lipid metabolism; phospholipid metabolism.</text>
</comment>
<comment type="subunit">
    <text evidence="1">Probably interacts with PlsX.</text>
</comment>
<comment type="subcellular location">
    <subcellularLocation>
        <location evidence="1">Cell inner membrane</location>
        <topology evidence="1">Multi-pass membrane protein</topology>
    </subcellularLocation>
</comment>
<comment type="similarity">
    <text evidence="1">Belongs to the PlsY family.</text>
</comment>
<gene>
    <name evidence="1" type="primary">plsY</name>
    <name type="ordered locus">all0492</name>
</gene>
<name>PLSY_NOSS1</name>
<keyword id="KW-0997">Cell inner membrane</keyword>
<keyword id="KW-1003">Cell membrane</keyword>
<keyword id="KW-0444">Lipid biosynthesis</keyword>
<keyword id="KW-0443">Lipid metabolism</keyword>
<keyword id="KW-0472">Membrane</keyword>
<keyword id="KW-0594">Phospholipid biosynthesis</keyword>
<keyword id="KW-1208">Phospholipid metabolism</keyword>
<keyword id="KW-1185">Reference proteome</keyword>
<keyword id="KW-0808">Transferase</keyword>
<keyword id="KW-0812">Transmembrane</keyword>
<keyword id="KW-1133">Transmembrane helix</keyword>
<sequence>MGFWLSLCGAVVLVAYLLGSFPTGYIAVKQLKGIDIREVGSGSTGATNVLRTLGKGPGAFVLGLDCLKGVLAIALVYYLFTFASNQNLIPTTVNIELWQPWLVTLAGIAAILGHSKSIFLGFTGGKSVATSLGILLAMNWQVGLATFGVFAVVVAISRIVSLSSIMGAIAVSIVMVFLQQPLPYILFGIAGGLYVILRHRSNIERLLAGTEPKIGQKLVTETEQSA</sequence>
<evidence type="ECO:0000255" key="1">
    <source>
        <dbReference type="HAMAP-Rule" id="MF_01043"/>
    </source>
</evidence>
<reference key="1">
    <citation type="journal article" date="2001" name="DNA Res.">
        <title>Complete genomic sequence of the filamentous nitrogen-fixing cyanobacterium Anabaena sp. strain PCC 7120.</title>
        <authorList>
            <person name="Kaneko T."/>
            <person name="Nakamura Y."/>
            <person name="Wolk C.P."/>
            <person name="Kuritz T."/>
            <person name="Sasamoto S."/>
            <person name="Watanabe A."/>
            <person name="Iriguchi M."/>
            <person name="Ishikawa A."/>
            <person name="Kawashima K."/>
            <person name="Kimura T."/>
            <person name="Kishida Y."/>
            <person name="Kohara M."/>
            <person name="Matsumoto M."/>
            <person name="Matsuno A."/>
            <person name="Muraki A."/>
            <person name="Nakazaki N."/>
            <person name="Shimpo S."/>
            <person name="Sugimoto M."/>
            <person name="Takazawa M."/>
            <person name="Yamada M."/>
            <person name="Yasuda M."/>
            <person name="Tabata S."/>
        </authorList>
    </citation>
    <scope>NUCLEOTIDE SEQUENCE [LARGE SCALE GENOMIC DNA]</scope>
    <source>
        <strain>PCC 7120 / SAG 25.82 / UTEX 2576</strain>
    </source>
</reference>
<dbReference type="EC" id="2.3.1.275" evidence="1"/>
<dbReference type="EMBL" id="BA000019">
    <property type="protein sequence ID" value="BAB72450.1"/>
    <property type="molecule type" value="Genomic_DNA"/>
</dbReference>
<dbReference type="PIR" id="AC1868">
    <property type="entry name" value="AC1868"/>
</dbReference>
<dbReference type="RefSeq" id="WP_010994668.1">
    <property type="nucleotide sequence ID" value="NZ_RSCN01000024.1"/>
</dbReference>
<dbReference type="SMR" id="Q8YZG8"/>
<dbReference type="STRING" id="103690.gene:10492501"/>
<dbReference type="KEGG" id="ana:all0492"/>
<dbReference type="eggNOG" id="COG0344">
    <property type="taxonomic scope" value="Bacteria"/>
</dbReference>
<dbReference type="OrthoDB" id="9777124at2"/>
<dbReference type="UniPathway" id="UPA00085"/>
<dbReference type="Proteomes" id="UP000002483">
    <property type="component" value="Chromosome"/>
</dbReference>
<dbReference type="GO" id="GO:0005886">
    <property type="term" value="C:plasma membrane"/>
    <property type="evidence" value="ECO:0007669"/>
    <property type="project" value="UniProtKB-SubCell"/>
</dbReference>
<dbReference type="GO" id="GO:0043772">
    <property type="term" value="F:acyl-phosphate glycerol-3-phosphate acyltransferase activity"/>
    <property type="evidence" value="ECO:0007669"/>
    <property type="project" value="UniProtKB-UniRule"/>
</dbReference>
<dbReference type="GO" id="GO:0008654">
    <property type="term" value="P:phospholipid biosynthetic process"/>
    <property type="evidence" value="ECO:0007669"/>
    <property type="project" value="UniProtKB-UniRule"/>
</dbReference>
<dbReference type="HAMAP" id="MF_01043">
    <property type="entry name" value="PlsY"/>
    <property type="match status" value="1"/>
</dbReference>
<dbReference type="InterPro" id="IPR003811">
    <property type="entry name" value="G3P_acylTferase_PlsY"/>
</dbReference>
<dbReference type="NCBIfam" id="TIGR00023">
    <property type="entry name" value="glycerol-3-phosphate 1-O-acyltransferase PlsY"/>
    <property type="match status" value="1"/>
</dbReference>
<dbReference type="PANTHER" id="PTHR30309:SF0">
    <property type="entry name" value="GLYCEROL-3-PHOSPHATE ACYLTRANSFERASE-RELATED"/>
    <property type="match status" value="1"/>
</dbReference>
<dbReference type="PANTHER" id="PTHR30309">
    <property type="entry name" value="INNER MEMBRANE PROTEIN YGIH"/>
    <property type="match status" value="1"/>
</dbReference>
<dbReference type="Pfam" id="PF02660">
    <property type="entry name" value="G3P_acyltransf"/>
    <property type="match status" value="1"/>
</dbReference>
<dbReference type="SMART" id="SM01207">
    <property type="entry name" value="G3P_acyltransf"/>
    <property type="match status" value="1"/>
</dbReference>
<protein>
    <recommendedName>
        <fullName evidence="1">Glycerol-3-phosphate acyltransferase</fullName>
    </recommendedName>
    <alternativeName>
        <fullName evidence="1">Acyl-PO4 G3P acyltransferase</fullName>
    </alternativeName>
    <alternativeName>
        <fullName evidence="1">Acyl-phosphate--glycerol-3-phosphate acyltransferase</fullName>
    </alternativeName>
    <alternativeName>
        <fullName evidence="1">G3P acyltransferase</fullName>
        <shortName evidence="1">GPAT</shortName>
        <ecNumber evidence="1">2.3.1.275</ecNumber>
    </alternativeName>
    <alternativeName>
        <fullName evidence="1">Lysophosphatidic acid synthase</fullName>
        <shortName evidence="1">LPA synthase</shortName>
    </alternativeName>
</protein>